<reference key="1">
    <citation type="journal article" date="1996" name="Yeast">
        <title>Analysis of a 36.2 kb DNA sequence including the right telomere of chromosome VI from Saccharomyces cerevisiae.</title>
        <authorList>
            <person name="Eki T."/>
            <person name="Naitou M."/>
            <person name="Hagiwara H."/>
            <person name="Ozawa M."/>
            <person name="Sasanuma S."/>
            <person name="Sasanuma M."/>
            <person name="Tsuchiya Y."/>
            <person name="Shibata T."/>
            <person name="Hanaoka F."/>
            <person name="Murakami Y."/>
        </authorList>
    </citation>
    <scope>NUCLEOTIDE SEQUENCE [GENOMIC DNA]</scope>
    <source>
        <strain>ATCC 204511 / S288c / AB972</strain>
    </source>
</reference>
<reference key="2">
    <citation type="journal article" date="1995" name="Nat. Genet.">
        <title>Analysis of the nucleotide sequence of chromosome VI from Saccharomyces cerevisiae.</title>
        <authorList>
            <person name="Murakami Y."/>
            <person name="Naitou M."/>
            <person name="Hagiwara H."/>
            <person name="Shibata T."/>
            <person name="Ozawa M."/>
            <person name="Sasanuma S."/>
            <person name="Sasanuma M."/>
            <person name="Tsuchiya Y."/>
            <person name="Soeda E."/>
            <person name="Yokoyama K."/>
            <person name="Yamazaki M."/>
            <person name="Tashiro H."/>
            <person name="Eki T."/>
        </authorList>
    </citation>
    <scope>NUCLEOTIDE SEQUENCE [LARGE SCALE GENOMIC DNA]</scope>
    <source>
        <strain>ATCC 204508 / S288c</strain>
    </source>
</reference>
<reference key="3">
    <citation type="journal article" date="2014" name="G3 (Bethesda)">
        <title>The reference genome sequence of Saccharomyces cerevisiae: Then and now.</title>
        <authorList>
            <person name="Engel S.R."/>
            <person name="Dietrich F.S."/>
            <person name="Fisk D.G."/>
            <person name="Binkley G."/>
            <person name="Balakrishnan R."/>
            <person name="Costanzo M.C."/>
            <person name="Dwight S.S."/>
            <person name="Hitz B.C."/>
            <person name="Karra K."/>
            <person name="Nash R.S."/>
            <person name="Weng S."/>
            <person name="Wong E.D."/>
            <person name="Lloyd P."/>
            <person name="Skrzypek M.S."/>
            <person name="Miyasato S.R."/>
            <person name="Simison M."/>
            <person name="Cherry J.M."/>
        </authorList>
    </citation>
    <scope>GENOME REANNOTATION</scope>
    <source>
        <strain>ATCC 204508 / S288c</strain>
    </source>
</reference>
<reference key="4">
    <citation type="journal article" date="2007" name="Genome Res.">
        <title>Approaching a complete repository of sequence-verified protein-encoding clones for Saccharomyces cerevisiae.</title>
        <authorList>
            <person name="Hu Y."/>
            <person name="Rolfs A."/>
            <person name="Bhullar B."/>
            <person name="Murthy T.V.S."/>
            <person name="Zhu C."/>
            <person name="Berger M.F."/>
            <person name="Camargo A.A."/>
            <person name="Kelley F."/>
            <person name="McCarron S."/>
            <person name="Jepson D."/>
            <person name="Richardson A."/>
            <person name="Raphael J."/>
            <person name="Moreira D."/>
            <person name="Taycher E."/>
            <person name="Zuo D."/>
            <person name="Mohr S."/>
            <person name="Kane M.F."/>
            <person name="Williamson J."/>
            <person name="Simpson A.J.G."/>
            <person name="Bulyk M.L."/>
            <person name="Harlow E."/>
            <person name="Marsischky G."/>
            <person name="Kolodner R.D."/>
            <person name="LaBaer J."/>
        </authorList>
    </citation>
    <scope>NUCLEOTIDE SEQUENCE [GENOMIC DNA]</scope>
    <source>
        <strain>ATCC 204508 / S288c</strain>
    </source>
</reference>
<organism>
    <name type="scientific">Saccharomyces cerevisiae (strain ATCC 204508 / S288c)</name>
    <name type="common">Baker's yeast</name>
    <dbReference type="NCBI Taxonomy" id="559292"/>
    <lineage>
        <taxon>Eukaryota</taxon>
        <taxon>Fungi</taxon>
        <taxon>Dikarya</taxon>
        <taxon>Ascomycota</taxon>
        <taxon>Saccharomycotina</taxon>
        <taxon>Saccharomycetes</taxon>
        <taxon>Saccharomycetales</taxon>
        <taxon>Saccharomycetaceae</taxon>
        <taxon>Saccharomyces</taxon>
    </lineage>
</organism>
<accession>P43625</accession>
<accession>D6VTT8</accession>
<dbReference type="EMBL" id="D50617">
    <property type="protein sequence ID" value="BAA09296.1"/>
    <property type="molecule type" value="Genomic_DNA"/>
</dbReference>
<dbReference type="EMBL" id="AY558478">
    <property type="protein sequence ID" value="AAS56804.1"/>
    <property type="molecule type" value="Genomic_DNA"/>
</dbReference>
<dbReference type="EMBL" id="BK006940">
    <property type="protein sequence ID" value="DAA12498.1"/>
    <property type="molecule type" value="Genomic_DNA"/>
</dbReference>
<dbReference type="PIR" id="S56312">
    <property type="entry name" value="S56312"/>
</dbReference>
<dbReference type="RefSeq" id="NP_116715.3">
    <property type="nucleotide sequence ID" value="NM_001180022.3"/>
</dbReference>
<dbReference type="BioGRID" id="31213">
    <property type="interactions" value="33"/>
</dbReference>
<dbReference type="DIP" id="DIP-1249N"/>
<dbReference type="FunCoup" id="P43625">
    <property type="interactions" value="29"/>
</dbReference>
<dbReference type="IntAct" id="P43625">
    <property type="interactions" value="1"/>
</dbReference>
<dbReference type="MINT" id="P43625"/>
<dbReference type="STRING" id="4932.YFR057W"/>
<dbReference type="PaxDb" id="4932-YFR057W"/>
<dbReference type="EnsemblFungi" id="YFR057W_mRNA">
    <property type="protein sequence ID" value="YFR057W"/>
    <property type="gene ID" value="YFR057W"/>
</dbReference>
<dbReference type="GeneID" id="850618"/>
<dbReference type="KEGG" id="sce:YFR057W"/>
<dbReference type="AGR" id="SGD:S000001953"/>
<dbReference type="SGD" id="S000001953">
    <property type="gene designation" value="YFR057W"/>
</dbReference>
<dbReference type="VEuPathDB" id="FungiDB:YFR057W"/>
<dbReference type="HOGENOM" id="CLU_1732527_0_0_1"/>
<dbReference type="InParanoid" id="P43625"/>
<dbReference type="OMA" id="LLXDSTN"/>
<dbReference type="OrthoDB" id="2428527at2759"/>
<dbReference type="BioCyc" id="YEAST:G3O-30499-MONOMER"/>
<dbReference type="BioGRID-ORCS" id="850618">
    <property type="hits" value="5 hits in 10 CRISPR screens"/>
</dbReference>
<dbReference type="PRO" id="PR:P43625"/>
<dbReference type="Proteomes" id="UP000002311">
    <property type="component" value="Chromosome VI"/>
</dbReference>
<dbReference type="RNAct" id="P43625">
    <property type="molecule type" value="protein"/>
</dbReference>
<protein>
    <recommendedName>
        <fullName>Uncharacterized protein YFR057W</fullName>
    </recommendedName>
</protein>
<gene>
    <name type="ordered locus">YFR057W</name>
</gene>
<sequence>MIFGPTSVYSKCSAKSSGIIKDTAKLPISRVRIKVMLEITVSFLFFDRFPRSFLNHNLYDSICPFFAWQYTSYYLSIYRQSFLFHFLQKDFSNDFVSEELIYALVALGAKNSFDNSLSKHTYEYYNHSKRNLLEDSTNKNSAFSSASVTKP</sequence>
<feature type="chain" id="PRO_0000202701" description="Uncharacterized protein YFR057W">
    <location>
        <begin position="1"/>
        <end position="151"/>
    </location>
</feature>
<name>YFM7_YEAST</name>
<proteinExistence type="predicted"/>
<keyword id="KW-1185">Reference proteome</keyword>